<feature type="chain" id="PRO_0000291425" description="UPF0435 protein SERP1418">
    <location>
        <begin position="1"/>
        <end position="71"/>
    </location>
</feature>
<accession>Q5HN54</accession>
<gene>
    <name type="ordered locus">SERP1418</name>
</gene>
<name>Y1418_STAEQ</name>
<proteinExistence type="inferred from homology"/>
<organism>
    <name type="scientific">Staphylococcus epidermidis (strain ATCC 35984 / DSM 28319 / BCRC 17069 / CCUG 31568 / BM 3577 / RP62A)</name>
    <dbReference type="NCBI Taxonomy" id="176279"/>
    <lineage>
        <taxon>Bacteria</taxon>
        <taxon>Bacillati</taxon>
        <taxon>Bacillota</taxon>
        <taxon>Bacilli</taxon>
        <taxon>Bacillales</taxon>
        <taxon>Staphylococcaceae</taxon>
        <taxon>Staphylococcus</taxon>
    </lineage>
</organism>
<comment type="similarity">
    <text evidence="1">Belongs to the UPF0435 family.</text>
</comment>
<dbReference type="EMBL" id="CP000029">
    <property type="protein sequence ID" value="AAW54775.1"/>
    <property type="molecule type" value="Genomic_DNA"/>
</dbReference>
<dbReference type="RefSeq" id="WP_010959205.1">
    <property type="nucleotide sequence ID" value="NC_002976.3"/>
</dbReference>
<dbReference type="SMR" id="Q5HN54"/>
<dbReference type="STRING" id="176279.SERP1418"/>
<dbReference type="KEGG" id="ser:SERP1418"/>
<dbReference type="eggNOG" id="COG4840">
    <property type="taxonomic scope" value="Bacteria"/>
</dbReference>
<dbReference type="HOGENOM" id="CLU_199533_0_0_9"/>
<dbReference type="Proteomes" id="UP000000531">
    <property type="component" value="Chromosome"/>
</dbReference>
<dbReference type="HAMAP" id="MF_00829">
    <property type="entry name" value="UPF0435"/>
    <property type="match status" value="1"/>
</dbReference>
<dbReference type="InterPro" id="IPR009507">
    <property type="entry name" value="UPF0435"/>
</dbReference>
<dbReference type="Pfam" id="PF06569">
    <property type="entry name" value="DUF1128"/>
    <property type="match status" value="1"/>
</dbReference>
<protein>
    <recommendedName>
        <fullName evidence="1">UPF0435 protein SERP1418</fullName>
    </recommendedName>
</protein>
<reference key="1">
    <citation type="journal article" date="2005" name="J. Bacteriol.">
        <title>Insights on evolution of virulence and resistance from the complete genome analysis of an early methicillin-resistant Staphylococcus aureus strain and a biofilm-producing methicillin-resistant Staphylococcus epidermidis strain.</title>
        <authorList>
            <person name="Gill S.R."/>
            <person name="Fouts D.E."/>
            <person name="Archer G.L."/>
            <person name="Mongodin E.F."/>
            <person name="DeBoy R.T."/>
            <person name="Ravel J."/>
            <person name="Paulsen I.T."/>
            <person name="Kolonay J.F."/>
            <person name="Brinkac L.M."/>
            <person name="Beanan M.J."/>
            <person name="Dodson R.J."/>
            <person name="Daugherty S.C."/>
            <person name="Madupu R."/>
            <person name="Angiuoli S.V."/>
            <person name="Durkin A.S."/>
            <person name="Haft D.H."/>
            <person name="Vamathevan J.J."/>
            <person name="Khouri H."/>
            <person name="Utterback T.R."/>
            <person name="Lee C."/>
            <person name="Dimitrov G."/>
            <person name="Jiang L."/>
            <person name="Qin H."/>
            <person name="Weidman J."/>
            <person name="Tran K."/>
            <person name="Kang K.H."/>
            <person name="Hance I.R."/>
            <person name="Nelson K.E."/>
            <person name="Fraser C.M."/>
        </authorList>
    </citation>
    <scope>NUCLEOTIDE SEQUENCE [LARGE SCALE GENOMIC DNA]</scope>
    <source>
        <strain>ATCC 35984 / DSM 28319 / BCRC 17069 / CCUG 31568 / BM 3577 / RP62A</strain>
    </source>
</reference>
<sequence length="71" mass="8174">MSLSNEEMISNIRQKLNIVNQALFNPEKFKSTPHQDISEIYEFVMSKDSFSPSEVTAIADHLGQLRQDMED</sequence>
<evidence type="ECO:0000255" key="1">
    <source>
        <dbReference type="HAMAP-Rule" id="MF_00829"/>
    </source>
</evidence>
<keyword id="KW-1185">Reference proteome</keyword>